<accession>A1BJX7</accession>
<proteinExistence type="inferred from homology"/>
<feature type="chain" id="PRO_1000004329" description="UDP-N-acetylmuramate--L-alanine ligase">
    <location>
        <begin position="1"/>
        <end position="466"/>
    </location>
</feature>
<feature type="binding site" evidence="1">
    <location>
        <begin position="114"/>
        <end position="120"/>
    </location>
    <ligand>
        <name>ATP</name>
        <dbReference type="ChEBI" id="CHEBI:30616"/>
    </ligand>
</feature>
<gene>
    <name evidence="1" type="primary">murC</name>
    <name type="ordered locus">Cpha266_2720</name>
</gene>
<name>MURC_CHLPD</name>
<organism>
    <name type="scientific">Chlorobium phaeobacteroides (strain DSM 266 / SMG 266 / 2430)</name>
    <dbReference type="NCBI Taxonomy" id="290317"/>
    <lineage>
        <taxon>Bacteria</taxon>
        <taxon>Pseudomonadati</taxon>
        <taxon>Chlorobiota</taxon>
        <taxon>Chlorobiia</taxon>
        <taxon>Chlorobiales</taxon>
        <taxon>Chlorobiaceae</taxon>
        <taxon>Chlorobium/Pelodictyon group</taxon>
        <taxon>Chlorobium</taxon>
    </lineage>
</organism>
<comment type="function">
    <text evidence="1">Cell wall formation.</text>
</comment>
<comment type="catalytic activity">
    <reaction evidence="1">
        <text>UDP-N-acetyl-alpha-D-muramate + L-alanine + ATP = UDP-N-acetyl-alpha-D-muramoyl-L-alanine + ADP + phosphate + H(+)</text>
        <dbReference type="Rhea" id="RHEA:23372"/>
        <dbReference type="ChEBI" id="CHEBI:15378"/>
        <dbReference type="ChEBI" id="CHEBI:30616"/>
        <dbReference type="ChEBI" id="CHEBI:43474"/>
        <dbReference type="ChEBI" id="CHEBI:57972"/>
        <dbReference type="ChEBI" id="CHEBI:70757"/>
        <dbReference type="ChEBI" id="CHEBI:83898"/>
        <dbReference type="ChEBI" id="CHEBI:456216"/>
        <dbReference type="EC" id="6.3.2.8"/>
    </reaction>
</comment>
<comment type="pathway">
    <text evidence="1">Cell wall biogenesis; peptidoglycan biosynthesis.</text>
</comment>
<comment type="subcellular location">
    <subcellularLocation>
        <location evidence="1">Cytoplasm</location>
    </subcellularLocation>
</comment>
<comment type="similarity">
    <text evidence="1">Belongs to the MurCDEF family.</text>
</comment>
<sequence>MELGKTKSVHIVGIGGAGMSAIAELLLTSGFGVTGSDLSSGEVTERLSERGAVIYQGHKAEQVGESDVVVYSSAIRPAENVEIVAAEQAGIPVIKRDEMLGELMRYNYGVCVSGTHGKTTTTAMIATMLIEAGESPTVMIGGVSDYLKGSTVVGSGKYLVIEADEFDRAFLKLTPTIAVINSLESEHMDTYGTIEELRKAFIAFANKVPFYGRVICCVDWPEIRKLIPHLNRRYTTFGIDEPADVMASDMVMDKNRSRFTVRASGKEYPGVSLNVPGRHNVMNALAAFASGLELGIAPERIIAGLTRYSGMRRRFQIKYDNSAGVLVVDDYAHHPSEVKAAVKAARDGWPNAEIVAVFQPHLFSRTREFADEYGWALLRADKIYVADIYPSREKAADYPGVSGSLVAAAVHKAGGKHAEFIADRELLYQTVETCPQKSTVVLFMGAGDITHLSTRLAGEWINKFSA</sequence>
<evidence type="ECO:0000255" key="1">
    <source>
        <dbReference type="HAMAP-Rule" id="MF_00046"/>
    </source>
</evidence>
<protein>
    <recommendedName>
        <fullName evidence="1">UDP-N-acetylmuramate--L-alanine ligase</fullName>
        <ecNumber evidence="1">6.3.2.8</ecNumber>
    </recommendedName>
    <alternativeName>
        <fullName evidence="1">UDP-N-acetylmuramoyl-L-alanine synthetase</fullName>
    </alternativeName>
</protein>
<reference key="1">
    <citation type="submission" date="2006-12" db="EMBL/GenBank/DDBJ databases">
        <title>Complete sequence of Chlorobium phaeobacteroides DSM 266.</title>
        <authorList>
            <consortium name="US DOE Joint Genome Institute"/>
            <person name="Copeland A."/>
            <person name="Lucas S."/>
            <person name="Lapidus A."/>
            <person name="Barry K."/>
            <person name="Detter J.C."/>
            <person name="Glavina del Rio T."/>
            <person name="Hammon N."/>
            <person name="Israni S."/>
            <person name="Pitluck S."/>
            <person name="Goltsman E."/>
            <person name="Schmutz J."/>
            <person name="Larimer F."/>
            <person name="Land M."/>
            <person name="Hauser L."/>
            <person name="Mikhailova N."/>
            <person name="Li T."/>
            <person name="Overmann J."/>
            <person name="Bryant D.A."/>
            <person name="Richardson P."/>
        </authorList>
    </citation>
    <scope>NUCLEOTIDE SEQUENCE [LARGE SCALE GENOMIC DNA]</scope>
    <source>
        <strain>DSM 266 / SMG 266 / 2430</strain>
    </source>
</reference>
<keyword id="KW-0067">ATP-binding</keyword>
<keyword id="KW-0131">Cell cycle</keyword>
<keyword id="KW-0132">Cell division</keyword>
<keyword id="KW-0133">Cell shape</keyword>
<keyword id="KW-0961">Cell wall biogenesis/degradation</keyword>
<keyword id="KW-0963">Cytoplasm</keyword>
<keyword id="KW-0436">Ligase</keyword>
<keyword id="KW-0547">Nucleotide-binding</keyword>
<keyword id="KW-0573">Peptidoglycan synthesis</keyword>
<keyword id="KW-1185">Reference proteome</keyword>
<dbReference type="EC" id="6.3.2.8" evidence="1"/>
<dbReference type="EMBL" id="CP000492">
    <property type="protein sequence ID" value="ABL66704.1"/>
    <property type="molecule type" value="Genomic_DNA"/>
</dbReference>
<dbReference type="RefSeq" id="WP_015961231.1">
    <property type="nucleotide sequence ID" value="NC_008639.1"/>
</dbReference>
<dbReference type="SMR" id="A1BJX7"/>
<dbReference type="STRING" id="290317.Cpha266_2720"/>
<dbReference type="KEGG" id="cph:Cpha266_2720"/>
<dbReference type="eggNOG" id="COG0773">
    <property type="taxonomic scope" value="Bacteria"/>
</dbReference>
<dbReference type="HOGENOM" id="CLU_028104_2_2_10"/>
<dbReference type="OrthoDB" id="9804126at2"/>
<dbReference type="UniPathway" id="UPA00219"/>
<dbReference type="Proteomes" id="UP000008701">
    <property type="component" value="Chromosome"/>
</dbReference>
<dbReference type="GO" id="GO:0005737">
    <property type="term" value="C:cytoplasm"/>
    <property type="evidence" value="ECO:0007669"/>
    <property type="project" value="UniProtKB-SubCell"/>
</dbReference>
<dbReference type="GO" id="GO:0005524">
    <property type="term" value="F:ATP binding"/>
    <property type="evidence" value="ECO:0007669"/>
    <property type="project" value="UniProtKB-UniRule"/>
</dbReference>
<dbReference type="GO" id="GO:0008763">
    <property type="term" value="F:UDP-N-acetylmuramate-L-alanine ligase activity"/>
    <property type="evidence" value="ECO:0007669"/>
    <property type="project" value="UniProtKB-UniRule"/>
</dbReference>
<dbReference type="GO" id="GO:0051301">
    <property type="term" value="P:cell division"/>
    <property type="evidence" value="ECO:0007669"/>
    <property type="project" value="UniProtKB-KW"/>
</dbReference>
<dbReference type="GO" id="GO:0071555">
    <property type="term" value="P:cell wall organization"/>
    <property type="evidence" value="ECO:0007669"/>
    <property type="project" value="UniProtKB-KW"/>
</dbReference>
<dbReference type="GO" id="GO:0009252">
    <property type="term" value="P:peptidoglycan biosynthetic process"/>
    <property type="evidence" value="ECO:0007669"/>
    <property type="project" value="UniProtKB-UniRule"/>
</dbReference>
<dbReference type="GO" id="GO:0008360">
    <property type="term" value="P:regulation of cell shape"/>
    <property type="evidence" value="ECO:0007669"/>
    <property type="project" value="UniProtKB-KW"/>
</dbReference>
<dbReference type="Gene3D" id="3.90.190.20">
    <property type="entry name" value="Mur ligase, C-terminal domain"/>
    <property type="match status" value="1"/>
</dbReference>
<dbReference type="Gene3D" id="3.40.1190.10">
    <property type="entry name" value="Mur-like, catalytic domain"/>
    <property type="match status" value="1"/>
</dbReference>
<dbReference type="Gene3D" id="3.40.50.720">
    <property type="entry name" value="NAD(P)-binding Rossmann-like Domain"/>
    <property type="match status" value="1"/>
</dbReference>
<dbReference type="HAMAP" id="MF_00046">
    <property type="entry name" value="MurC"/>
    <property type="match status" value="1"/>
</dbReference>
<dbReference type="InterPro" id="IPR036565">
    <property type="entry name" value="Mur-like_cat_sf"/>
</dbReference>
<dbReference type="InterPro" id="IPR004101">
    <property type="entry name" value="Mur_ligase_C"/>
</dbReference>
<dbReference type="InterPro" id="IPR036615">
    <property type="entry name" value="Mur_ligase_C_dom_sf"/>
</dbReference>
<dbReference type="InterPro" id="IPR013221">
    <property type="entry name" value="Mur_ligase_cen"/>
</dbReference>
<dbReference type="InterPro" id="IPR000713">
    <property type="entry name" value="Mur_ligase_N"/>
</dbReference>
<dbReference type="InterPro" id="IPR050061">
    <property type="entry name" value="MurCDEF_pg_biosynth"/>
</dbReference>
<dbReference type="InterPro" id="IPR005758">
    <property type="entry name" value="UDP-N-AcMur_Ala_ligase_MurC"/>
</dbReference>
<dbReference type="NCBIfam" id="TIGR01082">
    <property type="entry name" value="murC"/>
    <property type="match status" value="1"/>
</dbReference>
<dbReference type="PANTHER" id="PTHR43445:SF3">
    <property type="entry name" value="UDP-N-ACETYLMURAMATE--L-ALANINE LIGASE"/>
    <property type="match status" value="1"/>
</dbReference>
<dbReference type="PANTHER" id="PTHR43445">
    <property type="entry name" value="UDP-N-ACETYLMURAMATE--L-ALANINE LIGASE-RELATED"/>
    <property type="match status" value="1"/>
</dbReference>
<dbReference type="Pfam" id="PF01225">
    <property type="entry name" value="Mur_ligase"/>
    <property type="match status" value="1"/>
</dbReference>
<dbReference type="Pfam" id="PF02875">
    <property type="entry name" value="Mur_ligase_C"/>
    <property type="match status" value="1"/>
</dbReference>
<dbReference type="Pfam" id="PF08245">
    <property type="entry name" value="Mur_ligase_M"/>
    <property type="match status" value="1"/>
</dbReference>
<dbReference type="SUPFAM" id="SSF51984">
    <property type="entry name" value="MurCD N-terminal domain"/>
    <property type="match status" value="1"/>
</dbReference>
<dbReference type="SUPFAM" id="SSF53623">
    <property type="entry name" value="MurD-like peptide ligases, catalytic domain"/>
    <property type="match status" value="1"/>
</dbReference>
<dbReference type="SUPFAM" id="SSF53244">
    <property type="entry name" value="MurD-like peptide ligases, peptide-binding domain"/>
    <property type="match status" value="1"/>
</dbReference>